<reference key="1">
    <citation type="journal article" date="2000" name="Nature">
        <title>Sequence and analysis of chromosome 3 of the plant Arabidopsis thaliana.</title>
        <authorList>
            <person name="Salanoubat M."/>
            <person name="Lemcke K."/>
            <person name="Rieger M."/>
            <person name="Ansorge W."/>
            <person name="Unseld M."/>
            <person name="Fartmann B."/>
            <person name="Valle G."/>
            <person name="Bloecker H."/>
            <person name="Perez-Alonso M."/>
            <person name="Obermaier B."/>
            <person name="Delseny M."/>
            <person name="Boutry M."/>
            <person name="Grivell L.A."/>
            <person name="Mache R."/>
            <person name="Puigdomenech P."/>
            <person name="De Simone V."/>
            <person name="Choisne N."/>
            <person name="Artiguenave F."/>
            <person name="Robert C."/>
            <person name="Brottier P."/>
            <person name="Wincker P."/>
            <person name="Cattolico L."/>
            <person name="Weissenbach J."/>
            <person name="Saurin W."/>
            <person name="Quetier F."/>
            <person name="Schaefer M."/>
            <person name="Mueller-Auer S."/>
            <person name="Gabel C."/>
            <person name="Fuchs M."/>
            <person name="Benes V."/>
            <person name="Wurmbach E."/>
            <person name="Drzonek H."/>
            <person name="Erfle H."/>
            <person name="Jordan N."/>
            <person name="Bangert S."/>
            <person name="Wiedelmann R."/>
            <person name="Kranz H."/>
            <person name="Voss H."/>
            <person name="Holland R."/>
            <person name="Brandt P."/>
            <person name="Nyakatura G."/>
            <person name="Vezzi A."/>
            <person name="D'Angelo M."/>
            <person name="Pallavicini A."/>
            <person name="Toppo S."/>
            <person name="Simionati B."/>
            <person name="Conrad A."/>
            <person name="Hornischer K."/>
            <person name="Kauer G."/>
            <person name="Loehnert T.-H."/>
            <person name="Nordsiek G."/>
            <person name="Reichelt J."/>
            <person name="Scharfe M."/>
            <person name="Schoen O."/>
            <person name="Bargues M."/>
            <person name="Terol J."/>
            <person name="Climent J."/>
            <person name="Navarro P."/>
            <person name="Collado C."/>
            <person name="Perez-Perez A."/>
            <person name="Ottenwaelder B."/>
            <person name="Duchemin D."/>
            <person name="Cooke R."/>
            <person name="Laudie M."/>
            <person name="Berger-Llauro C."/>
            <person name="Purnelle B."/>
            <person name="Masuy D."/>
            <person name="de Haan M."/>
            <person name="Maarse A.C."/>
            <person name="Alcaraz J.-P."/>
            <person name="Cottet A."/>
            <person name="Casacuberta E."/>
            <person name="Monfort A."/>
            <person name="Argiriou A."/>
            <person name="Flores M."/>
            <person name="Liguori R."/>
            <person name="Vitale D."/>
            <person name="Mannhaupt G."/>
            <person name="Haase D."/>
            <person name="Schoof H."/>
            <person name="Rudd S."/>
            <person name="Zaccaria P."/>
            <person name="Mewes H.-W."/>
            <person name="Mayer K.F.X."/>
            <person name="Kaul S."/>
            <person name="Town C.D."/>
            <person name="Koo H.L."/>
            <person name="Tallon L.J."/>
            <person name="Jenkins J."/>
            <person name="Rooney T."/>
            <person name="Rizzo M."/>
            <person name="Walts A."/>
            <person name="Utterback T."/>
            <person name="Fujii C.Y."/>
            <person name="Shea T.P."/>
            <person name="Creasy T.H."/>
            <person name="Haas B."/>
            <person name="Maiti R."/>
            <person name="Wu D."/>
            <person name="Peterson J."/>
            <person name="Van Aken S."/>
            <person name="Pai G."/>
            <person name="Militscher J."/>
            <person name="Sellers P."/>
            <person name="Gill J.E."/>
            <person name="Feldblyum T.V."/>
            <person name="Preuss D."/>
            <person name="Lin X."/>
            <person name="Nierman W.C."/>
            <person name="Salzberg S.L."/>
            <person name="White O."/>
            <person name="Venter J.C."/>
            <person name="Fraser C.M."/>
            <person name="Kaneko T."/>
            <person name="Nakamura Y."/>
            <person name="Sato S."/>
            <person name="Kato T."/>
            <person name="Asamizu E."/>
            <person name="Sasamoto S."/>
            <person name="Kimura T."/>
            <person name="Idesawa K."/>
            <person name="Kawashima K."/>
            <person name="Kishida Y."/>
            <person name="Kiyokawa C."/>
            <person name="Kohara M."/>
            <person name="Matsumoto M."/>
            <person name="Matsuno A."/>
            <person name="Muraki A."/>
            <person name="Nakayama S."/>
            <person name="Nakazaki N."/>
            <person name="Shinpo S."/>
            <person name="Takeuchi C."/>
            <person name="Wada T."/>
            <person name="Watanabe A."/>
            <person name="Yamada M."/>
            <person name="Yasuda M."/>
            <person name="Tabata S."/>
        </authorList>
    </citation>
    <scope>NUCLEOTIDE SEQUENCE [LARGE SCALE GENOMIC DNA]</scope>
    <source>
        <strain>cv. Columbia</strain>
    </source>
</reference>
<reference key="2">
    <citation type="journal article" date="2017" name="Plant J.">
        <title>Araport11: a complete reannotation of the Arabidopsis thaliana reference genome.</title>
        <authorList>
            <person name="Cheng C.Y."/>
            <person name="Krishnakumar V."/>
            <person name="Chan A.P."/>
            <person name="Thibaud-Nissen F."/>
            <person name="Schobel S."/>
            <person name="Town C.D."/>
        </authorList>
    </citation>
    <scope>GENOME REANNOTATION</scope>
    <source>
        <strain>cv. Columbia</strain>
    </source>
</reference>
<reference key="3">
    <citation type="journal article" date="2007" name="Plant Physiol.">
        <title>A putative hydroxysteroid dehydrogenase involved in regulating plant growth and development.</title>
        <authorList>
            <person name="Li F."/>
            <person name="Asami T."/>
            <person name="Wu X."/>
            <person name="Tsang E.W."/>
            <person name="Cutler A.J."/>
        </authorList>
    </citation>
    <scope>GENE FAMILY</scope>
</reference>
<reference key="4">
    <citation type="journal article" date="2009" name="Plant Cell Physiol.">
        <title>Regulation of HSD1 in seeds of Arabidopsis thaliana.</title>
        <authorList>
            <person name="Baud S."/>
            <person name="Dichow N.R."/>
            <person name="Kelemen Z."/>
            <person name="d'Andrea S."/>
            <person name="To A."/>
            <person name="Berger N."/>
            <person name="Canonge M."/>
            <person name="Kronenberger J."/>
            <person name="Viterbo D."/>
            <person name="Dubreucq B."/>
            <person name="Lepiniec L."/>
            <person name="Chardot T."/>
            <person name="Miquel M."/>
        </authorList>
    </citation>
    <scope>GENE FAMILY</scope>
</reference>
<comment type="subcellular location">
    <subcellularLocation>
        <location evidence="4">Membrane</location>
        <topology evidence="4">Single-pass type II membrane protein</topology>
    </subcellularLocation>
</comment>
<comment type="similarity">
    <text evidence="4">Belongs to the short-chain dehydrogenases/reductases (SDR) family.</text>
</comment>
<evidence type="ECO:0000250" key="1"/>
<evidence type="ECO:0000255" key="2"/>
<evidence type="ECO:0000255" key="3">
    <source>
        <dbReference type="PROSITE-ProRule" id="PRU10001"/>
    </source>
</evidence>
<evidence type="ECO:0000305" key="4"/>
<proteinExistence type="inferred from homology"/>
<gene>
    <name type="primary">HSD3</name>
    <name type="ordered locus">At3g47360</name>
    <name type="ORF">T21L8.110</name>
</gene>
<accession>Q9STY7</accession>
<name>HSD3_ARATH</name>
<sequence length="309" mass="34947">MDILTTILNLLLPPLTIIFLFLFYPFYLLIKLVLCLRKNLHFENVARKVVLITGASSGIGEHVAYEYAKKGAYLALVARRRDRLEIVAETSRQLGSGNVIIIPGDVSNVEDCKKFIDETIRHFGKLDHLINNAGVFQTVLFEDFTQIQDANPIMDINFWGTTYITYFAIPHLRKSKGKIVAITSGSANIPLPLASIYAASKAALLRFFETLRIELSPDIKITIVLPGVVSTDMTTPHCIEKYGSDFILSESVSKCAKAIFRGIGRGETYIEEPSWMKWLFIMKNVCPEIVDYGLNYLFVSYLKPYFKRD</sequence>
<keyword id="KW-0444">Lipid biosynthesis</keyword>
<keyword id="KW-0443">Lipid metabolism</keyword>
<keyword id="KW-0472">Membrane</keyword>
<keyword id="KW-0521">NADP</keyword>
<keyword id="KW-0560">Oxidoreductase</keyword>
<keyword id="KW-1185">Reference proteome</keyword>
<keyword id="KW-0735">Signal-anchor</keyword>
<keyword id="KW-0752">Steroid biosynthesis</keyword>
<keyword id="KW-0812">Transmembrane</keyword>
<keyword id="KW-1133">Transmembrane helix</keyword>
<feature type="chain" id="PRO_0000422281" description="11-beta-hydroxysteroid dehydrogenase-like 3">
    <location>
        <begin position="1"/>
        <end position="309"/>
    </location>
</feature>
<feature type="transmembrane region" description="Helical; Signal-anchor for type II membrane protein" evidence="2">
    <location>
        <begin position="10"/>
        <end position="30"/>
    </location>
</feature>
<feature type="active site" description="Proton acceptor" evidence="3">
    <location>
        <position position="197"/>
    </location>
</feature>
<feature type="binding site" evidence="1">
    <location>
        <begin position="54"/>
        <end position="80"/>
    </location>
    <ligand>
        <name>NADP(+)</name>
        <dbReference type="ChEBI" id="CHEBI:58349"/>
    </ligand>
</feature>
<feature type="binding site" evidence="1">
    <location>
        <position position="105"/>
    </location>
    <ligand>
        <name>NADP(+)</name>
        <dbReference type="ChEBI" id="CHEBI:58349"/>
    </ligand>
</feature>
<feature type="binding site" evidence="1">
    <location>
        <position position="184"/>
    </location>
    <ligand>
        <name>substrate</name>
    </ligand>
</feature>
<feature type="binding site" evidence="1">
    <location>
        <begin position="197"/>
        <end position="201"/>
    </location>
    <ligand>
        <name>NADP(+)</name>
        <dbReference type="ChEBI" id="CHEBI:58349"/>
    </ligand>
</feature>
<feature type="binding site" evidence="1">
    <location>
        <position position="201"/>
    </location>
    <ligand>
        <name>NADP(+)</name>
        <dbReference type="ChEBI" id="CHEBI:58349"/>
    </ligand>
</feature>
<dbReference type="EC" id="1.1.1.-"/>
<dbReference type="EMBL" id="AL096860">
    <property type="protein sequence ID" value="CAB51208.1"/>
    <property type="molecule type" value="Genomic_DNA"/>
</dbReference>
<dbReference type="EMBL" id="CP002686">
    <property type="protein sequence ID" value="AEE78270.1"/>
    <property type="molecule type" value="Genomic_DNA"/>
</dbReference>
<dbReference type="PIR" id="T12991">
    <property type="entry name" value="T12991"/>
</dbReference>
<dbReference type="RefSeq" id="NP_190320.1">
    <property type="nucleotide sequence ID" value="NM_114604.2"/>
</dbReference>
<dbReference type="SMR" id="Q9STY7"/>
<dbReference type="FunCoup" id="Q9STY7">
    <property type="interactions" value="157"/>
</dbReference>
<dbReference type="STRING" id="3702.Q9STY7"/>
<dbReference type="PaxDb" id="3702-AT3G47360.1"/>
<dbReference type="ProteomicsDB" id="232108"/>
<dbReference type="EnsemblPlants" id="AT3G47360.1">
    <property type="protein sequence ID" value="AT3G47360.1"/>
    <property type="gene ID" value="AT3G47360"/>
</dbReference>
<dbReference type="GeneID" id="823890"/>
<dbReference type="Gramene" id="AT3G47360.1">
    <property type="protein sequence ID" value="AT3G47360.1"/>
    <property type="gene ID" value="AT3G47360"/>
</dbReference>
<dbReference type="KEGG" id="ath:AT3G47360"/>
<dbReference type="Araport" id="AT3G47360"/>
<dbReference type="TAIR" id="AT3G47360">
    <property type="gene designation" value="HSD3"/>
</dbReference>
<dbReference type="eggNOG" id="KOG1205">
    <property type="taxonomic scope" value="Eukaryota"/>
</dbReference>
<dbReference type="HOGENOM" id="CLU_010194_2_1_1"/>
<dbReference type="InParanoid" id="Q9STY7"/>
<dbReference type="OMA" id="SMEDMTF"/>
<dbReference type="PhylomeDB" id="Q9STY7"/>
<dbReference type="BioCyc" id="ARA:AT3G47360-MONOMER"/>
<dbReference type="PRO" id="PR:Q9STY7"/>
<dbReference type="Proteomes" id="UP000006548">
    <property type="component" value="Chromosome 3"/>
</dbReference>
<dbReference type="ExpressionAtlas" id="Q9STY7">
    <property type="expression patterns" value="baseline and differential"/>
</dbReference>
<dbReference type="GO" id="GO:0016020">
    <property type="term" value="C:membrane"/>
    <property type="evidence" value="ECO:0007669"/>
    <property type="project" value="UniProtKB-SubCell"/>
</dbReference>
<dbReference type="GO" id="GO:0016491">
    <property type="term" value="F:oxidoreductase activity"/>
    <property type="evidence" value="ECO:0007669"/>
    <property type="project" value="UniProtKB-KW"/>
</dbReference>
<dbReference type="GO" id="GO:0006694">
    <property type="term" value="P:steroid biosynthetic process"/>
    <property type="evidence" value="ECO:0007669"/>
    <property type="project" value="UniProtKB-KW"/>
</dbReference>
<dbReference type="Gene3D" id="3.40.50.720">
    <property type="entry name" value="NAD(P)-binding Rossmann-like Domain"/>
    <property type="match status" value="1"/>
</dbReference>
<dbReference type="InterPro" id="IPR036291">
    <property type="entry name" value="NAD(P)-bd_dom_sf"/>
</dbReference>
<dbReference type="InterPro" id="IPR020904">
    <property type="entry name" value="Sc_DH/Rdtase_CS"/>
</dbReference>
<dbReference type="InterPro" id="IPR002347">
    <property type="entry name" value="SDR_fam"/>
</dbReference>
<dbReference type="PANTHER" id="PTHR43391:SF76">
    <property type="entry name" value="11-BETA-HYDROXYSTEROID DEHYDROGENASE-LIKE 2-RELATED"/>
    <property type="match status" value="1"/>
</dbReference>
<dbReference type="PANTHER" id="PTHR43391">
    <property type="entry name" value="RETINOL DEHYDROGENASE-RELATED"/>
    <property type="match status" value="1"/>
</dbReference>
<dbReference type="Pfam" id="PF00106">
    <property type="entry name" value="adh_short"/>
    <property type="match status" value="1"/>
</dbReference>
<dbReference type="PIRSF" id="PIRSF000126">
    <property type="entry name" value="11-beta-HSD1"/>
    <property type="match status" value="1"/>
</dbReference>
<dbReference type="PRINTS" id="PR00081">
    <property type="entry name" value="GDHRDH"/>
</dbReference>
<dbReference type="PRINTS" id="PR00080">
    <property type="entry name" value="SDRFAMILY"/>
</dbReference>
<dbReference type="SUPFAM" id="SSF51735">
    <property type="entry name" value="NAD(P)-binding Rossmann-fold domains"/>
    <property type="match status" value="1"/>
</dbReference>
<dbReference type="PROSITE" id="PS00061">
    <property type="entry name" value="ADH_SHORT"/>
    <property type="match status" value="1"/>
</dbReference>
<organism>
    <name type="scientific">Arabidopsis thaliana</name>
    <name type="common">Mouse-ear cress</name>
    <dbReference type="NCBI Taxonomy" id="3702"/>
    <lineage>
        <taxon>Eukaryota</taxon>
        <taxon>Viridiplantae</taxon>
        <taxon>Streptophyta</taxon>
        <taxon>Embryophyta</taxon>
        <taxon>Tracheophyta</taxon>
        <taxon>Spermatophyta</taxon>
        <taxon>Magnoliopsida</taxon>
        <taxon>eudicotyledons</taxon>
        <taxon>Gunneridae</taxon>
        <taxon>Pentapetalae</taxon>
        <taxon>rosids</taxon>
        <taxon>malvids</taxon>
        <taxon>Brassicales</taxon>
        <taxon>Brassicaceae</taxon>
        <taxon>Camelineae</taxon>
        <taxon>Arabidopsis</taxon>
    </lineage>
</organism>
<protein>
    <recommendedName>
        <fullName>11-beta-hydroxysteroid dehydrogenase-like 3</fullName>
        <ecNumber>1.1.1.-</ecNumber>
    </recommendedName>
    <alternativeName>
        <fullName>17-beta-hydroxysteroid dehydrogenase-like 3</fullName>
        <ecNumber>1.1.1.-</ecNumber>
    </alternativeName>
    <alternativeName>
        <fullName>Hydroxysteroid dehydrogenase 3</fullName>
        <shortName>AtHSD3</shortName>
    </alternativeName>
</protein>